<organism>
    <name type="scientific">Musa acuminata</name>
    <name type="common">Banana</name>
    <name type="synonym">Musa cavendishii</name>
    <dbReference type="NCBI Taxonomy" id="4641"/>
    <lineage>
        <taxon>Eukaryota</taxon>
        <taxon>Viridiplantae</taxon>
        <taxon>Streptophyta</taxon>
        <taxon>Embryophyta</taxon>
        <taxon>Tracheophyta</taxon>
        <taxon>Spermatophyta</taxon>
        <taxon>Magnoliopsida</taxon>
        <taxon>Liliopsida</taxon>
        <taxon>Zingiberales</taxon>
        <taxon>Musaceae</taxon>
        <taxon>Musa</taxon>
    </lineage>
</organism>
<gene>
    <name type="primary">FBPban1</name>
</gene>
<evidence type="ECO:0000250" key="1"/>
<evidence type="ECO:0000305" key="2"/>
<dbReference type="EC" id="3.1.3.11"/>
<dbReference type="EMBL" id="AF130251">
    <property type="protein sequence ID" value="AAD28755.1"/>
    <property type="molecule type" value="mRNA"/>
</dbReference>
<dbReference type="SMR" id="Q9XF47"/>
<dbReference type="GO" id="GO:0005829">
    <property type="term" value="C:cytosol"/>
    <property type="evidence" value="ECO:0007669"/>
    <property type="project" value="TreeGrafter"/>
</dbReference>
<dbReference type="GO" id="GO:0042132">
    <property type="term" value="F:fructose 1,6-bisphosphate 1-phosphatase activity"/>
    <property type="evidence" value="ECO:0007669"/>
    <property type="project" value="UniProtKB-EC"/>
</dbReference>
<dbReference type="GO" id="GO:0046872">
    <property type="term" value="F:metal ion binding"/>
    <property type="evidence" value="ECO:0007669"/>
    <property type="project" value="UniProtKB-KW"/>
</dbReference>
<dbReference type="GO" id="GO:0030388">
    <property type="term" value="P:fructose 1,6-bisphosphate metabolic process"/>
    <property type="evidence" value="ECO:0007669"/>
    <property type="project" value="TreeGrafter"/>
</dbReference>
<dbReference type="GO" id="GO:0006002">
    <property type="term" value="P:fructose 6-phosphate metabolic process"/>
    <property type="evidence" value="ECO:0007669"/>
    <property type="project" value="TreeGrafter"/>
</dbReference>
<dbReference type="GO" id="GO:0006000">
    <property type="term" value="P:fructose metabolic process"/>
    <property type="evidence" value="ECO:0007669"/>
    <property type="project" value="TreeGrafter"/>
</dbReference>
<dbReference type="GO" id="GO:0006094">
    <property type="term" value="P:gluconeogenesis"/>
    <property type="evidence" value="ECO:0007669"/>
    <property type="project" value="TreeGrafter"/>
</dbReference>
<dbReference type="GO" id="GO:0005986">
    <property type="term" value="P:sucrose biosynthetic process"/>
    <property type="evidence" value="ECO:0007669"/>
    <property type="project" value="TreeGrafter"/>
</dbReference>
<dbReference type="CDD" id="cd00354">
    <property type="entry name" value="FBPase"/>
    <property type="match status" value="1"/>
</dbReference>
<dbReference type="FunFam" id="3.40.190.80:FF:000001">
    <property type="entry name" value="Fructose-1,6-bisphosphatase class 1"/>
    <property type="match status" value="1"/>
</dbReference>
<dbReference type="FunFam" id="3.30.540.10:FF:000008">
    <property type="entry name" value="Fructose-1,6-bisphosphatase, cytosolic"/>
    <property type="match status" value="1"/>
</dbReference>
<dbReference type="Gene3D" id="3.40.190.80">
    <property type="match status" value="1"/>
</dbReference>
<dbReference type="Gene3D" id="3.30.540.10">
    <property type="entry name" value="Fructose-1,6-Bisphosphatase, subunit A, domain 1"/>
    <property type="match status" value="1"/>
</dbReference>
<dbReference type="HAMAP" id="MF_01855">
    <property type="entry name" value="FBPase_class1"/>
    <property type="match status" value="1"/>
</dbReference>
<dbReference type="InterPro" id="IPR044015">
    <property type="entry name" value="FBPase_C_dom"/>
</dbReference>
<dbReference type="InterPro" id="IPR000146">
    <property type="entry name" value="FBPase_class-1"/>
</dbReference>
<dbReference type="InterPro" id="IPR033391">
    <property type="entry name" value="FBPase_N"/>
</dbReference>
<dbReference type="InterPro" id="IPR028343">
    <property type="entry name" value="FBPtase"/>
</dbReference>
<dbReference type="InterPro" id="IPR020548">
    <property type="entry name" value="Fructose_bisphosphatase_AS"/>
</dbReference>
<dbReference type="NCBIfam" id="NF006778">
    <property type="entry name" value="PRK09293.1-1"/>
    <property type="match status" value="1"/>
</dbReference>
<dbReference type="PANTHER" id="PTHR11556:SF41">
    <property type="entry name" value="FRUCTOSE-1,6-BISPHOSPHATASE, CYTOSOLIC"/>
    <property type="match status" value="1"/>
</dbReference>
<dbReference type="PANTHER" id="PTHR11556">
    <property type="entry name" value="FRUCTOSE-1,6-BISPHOSPHATASE-RELATED"/>
    <property type="match status" value="1"/>
</dbReference>
<dbReference type="Pfam" id="PF00316">
    <property type="entry name" value="FBPase"/>
    <property type="match status" value="1"/>
</dbReference>
<dbReference type="Pfam" id="PF18913">
    <property type="entry name" value="FBPase_C"/>
    <property type="match status" value="1"/>
</dbReference>
<dbReference type="PIRSF" id="PIRSF500210">
    <property type="entry name" value="FBPtase"/>
    <property type="match status" value="1"/>
</dbReference>
<dbReference type="PIRSF" id="PIRSF000904">
    <property type="entry name" value="FBPtase_SBPase"/>
    <property type="match status" value="1"/>
</dbReference>
<dbReference type="PRINTS" id="PR00115">
    <property type="entry name" value="F16BPHPHTASE"/>
</dbReference>
<dbReference type="SUPFAM" id="SSF56655">
    <property type="entry name" value="Carbohydrate phosphatase"/>
    <property type="match status" value="1"/>
</dbReference>
<dbReference type="PROSITE" id="PS00124">
    <property type="entry name" value="FBPASE"/>
    <property type="match status" value="1"/>
</dbReference>
<accession>Q9XF47</accession>
<feature type="chain" id="PRO_0000200515" description="Fructose-1,6-bisphosphatase, cytosolic">
    <location>
        <begin position="1"/>
        <end position="341"/>
    </location>
</feature>
<feature type="binding site" evidence="1">
    <location>
        <position position="100"/>
    </location>
    <ligand>
        <name>Mg(2+)</name>
        <dbReference type="ChEBI" id="CHEBI:18420"/>
        <label>1</label>
    </ligand>
</feature>
<feature type="binding site" evidence="1">
    <location>
        <position position="100"/>
    </location>
    <ligand>
        <name>Mg(2+)</name>
        <dbReference type="ChEBI" id="CHEBI:18420"/>
        <label>2</label>
    </ligand>
</feature>
<feature type="binding site" evidence="1">
    <location>
        <position position="121"/>
    </location>
    <ligand>
        <name>Mg(2+)</name>
        <dbReference type="ChEBI" id="CHEBI:18420"/>
        <label>2</label>
    </ligand>
</feature>
<feature type="binding site" evidence="1">
    <location>
        <position position="121"/>
    </location>
    <ligand>
        <name>Mg(2+)</name>
        <dbReference type="ChEBI" id="CHEBI:18420"/>
        <label>3</label>
    </ligand>
</feature>
<feature type="binding site" evidence="1">
    <location>
        <position position="123"/>
    </location>
    <ligand>
        <name>Mg(2+)</name>
        <dbReference type="ChEBI" id="CHEBI:18420"/>
        <label>2</label>
    </ligand>
</feature>
<feature type="binding site" evidence="1">
    <location>
        <begin position="124"/>
        <end position="127"/>
    </location>
    <ligand>
        <name>substrate</name>
    </ligand>
</feature>
<feature type="binding site" evidence="1">
    <location>
        <position position="124"/>
    </location>
    <ligand>
        <name>Mg(2+)</name>
        <dbReference type="ChEBI" id="CHEBI:18420"/>
        <label>3</label>
    </ligand>
</feature>
<feature type="binding site" evidence="1">
    <location>
        <position position="215"/>
    </location>
    <ligand>
        <name>substrate</name>
    </ligand>
</feature>
<feature type="binding site" evidence="1">
    <location>
        <position position="247"/>
    </location>
    <ligand>
        <name>substrate</name>
    </ligand>
</feature>
<feature type="binding site" evidence="1">
    <location>
        <position position="267"/>
    </location>
    <ligand>
        <name>substrate</name>
    </ligand>
</feature>
<feature type="binding site" evidence="1">
    <location>
        <position position="277"/>
    </location>
    <ligand>
        <name>substrate</name>
    </ligand>
</feature>
<feature type="binding site" evidence="1">
    <location>
        <position position="283"/>
    </location>
    <ligand>
        <name>Mg(2+)</name>
        <dbReference type="ChEBI" id="CHEBI:18420"/>
        <label>3</label>
    </ligand>
</feature>
<sequence length="341" mass="37304">MDHEAEAHRTDLMTITRYVLNEQSRHQESRGDFTILLSHIVLGCKFVCSAVNKAGLAKLIGLAGETNVQGGSKRKLDVLSNEVFVKALISSGRTCILVSEEDEEATFVDPSLRGKYCVVFDPLDGSSNIDCGVSIGTIFGVYMVKDKDNVTLDEVLQPGKNMLAAGYCMYGSSCTLVLSTGSGVNGFTLDPSLGEFILTHPDIKIPKKGKIYSVNEGNAKNWDGPTTKYVEKCKFPKDGDSPKSLRYIGSMVADVHRTLLYGGIFLYPADKKSPNGKLRVLYEVFPMSFLMEQAGGQAFTGKQRALDLVPTKIHQRSPIFLGSYDEVEEIKALYAAEENTA</sequence>
<protein>
    <recommendedName>
        <fullName>Fructose-1,6-bisphosphatase, cytosolic</fullName>
        <shortName>FBPase</shortName>
        <ecNumber>3.1.3.11</ecNumber>
    </recommendedName>
    <alternativeName>
        <fullName>D-fructose-1,6-bisphosphate 1-phosphohydrolase</fullName>
    </alternativeName>
</protein>
<keyword id="KW-0119">Carbohydrate metabolism</keyword>
<keyword id="KW-0963">Cytoplasm</keyword>
<keyword id="KW-0378">Hydrolase</keyword>
<keyword id="KW-0460">Magnesium</keyword>
<keyword id="KW-0479">Metal-binding</keyword>
<reference key="1">
    <citation type="submission" date="1999-02" db="EMBL/GenBank/DDBJ databases">
        <title>Musa acuminata FBPase.</title>
        <authorList>
            <person name="Regev I."/>
            <person name="Khayat E."/>
            <person name="Gepstein S."/>
        </authorList>
    </citation>
    <scope>NUCLEOTIDE SEQUENCE [MRNA]</scope>
</reference>
<proteinExistence type="evidence at transcript level"/>
<comment type="catalytic activity">
    <reaction>
        <text>beta-D-fructose 1,6-bisphosphate + H2O = beta-D-fructose 6-phosphate + phosphate</text>
        <dbReference type="Rhea" id="RHEA:11064"/>
        <dbReference type="ChEBI" id="CHEBI:15377"/>
        <dbReference type="ChEBI" id="CHEBI:32966"/>
        <dbReference type="ChEBI" id="CHEBI:43474"/>
        <dbReference type="ChEBI" id="CHEBI:57634"/>
        <dbReference type="EC" id="3.1.3.11"/>
    </reaction>
</comment>
<comment type="cofactor">
    <cofactor evidence="1">
        <name>Mg(2+)</name>
        <dbReference type="ChEBI" id="CHEBI:18420"/>
    </cofactor>
    <text evidence="1">Binds 3 Mg(2+) ions per subunit.</text>
</comment>
<comment type="subcellular location">
    <subcellularLocation>
        <location evidence="1">Cytoplasm</location>
    </subcellularLocation>
</comment>
<comment type="miscellaneous">
    <text>In plants there are two FBPase isozymes: one in the cytosol and the other in the chloroplast.</text>
</comment>
<comment type="similarity">
    <text evidence="2">Belongs to the FBPase class 1 family.</text>
</comment>
<name>F16P2_MUSAC</name>